<dbReference type="EC" id="6.2.1.5" evidence="1"/>
<dbReference type="EMBL" id="CP000305">
    <property type="protein sequence ID" value="ABG19210.1"/>
    <property type="molecule type" value="Genomic_DNA"/>
</dbReference>
<dbReference type="EMBL" id="ACNQ01000017">
    <property type="protein sequence ID" value="EEO75357.1"/>
    <property type="molecule type" value="Genomic_DNA"/>
</dbReference>
<dbReference type="RefSeq" id="WP_002210728.1">
    <property type="nucleotide sequence ID" value="NZ_ACNQ01000017.1"/>
</dbReference>
<dbReference type="SMR" id="Q1CFM0"/>
<dbReference type="GeneID" id="57977251"/>
<dbReference type="KEGG" id="ypn:YPN_2883"/>
<dbReference type="HOGENOM" id="CLU_037430_0_2_6"/>
<dbReference type="UniPathway" id="UPA00223">
    <property type="reaction ID" value="UER00999"/>
</dbReference>
<dbReference type="Proteomes" id="UP000008936">
    <property type="component" value="Chromosome"/>
</dbReference>
<dbReference type="GO" id="GO:0005829">
    <property type="term" value="C:cytosol"/>
    <property type="evidence" value="ECO:0007669"/>
    <property type="project" value="TreeGrafter"/>
</dbReference>
<dbReference type="GO" id="GO:0042709">
    <property type="term" value="C:succinate-CoA ligase complex"/>
    <property type="evidence" value="ECO:0007669"/>
    <property type="project" value="TreeGrafter"/>
</dbReference>
<dbReference type="GO" id="GO:0005524">
    <property type="term" value="F:ATP binding"/>
    <property type="evidence" value="ECO:0007669"/>
    <property type="project" value="UniProtKB-UniRule"/>
</dbReference>
<dbReference type="GO" id="GO:0000287">
    <property type="term" value="F:magnesium ion binding"/>
    <property type="evidence" value="ECO:0007669"/>
    <property type="project" value="UniProtKB-UniRule"/>
</dbReference>
<dbReference type="GO" id="GO:0004775">
    <property type="term" value="F:succinate-CoA ligase (ADP-forming) activity"/>
    <property type="evidence" value="ECO:0007669"/>
    <property type="project" value="UniProtKB-UniRule"/>
</dbReference>
<dbReference type="GO" id="GO:0004776">
    <property type="term" value="F:succinate-CoA ligase (GDP-forming) activity"/>
    <property type="evidence" value="ECO:0007669"/>
    <property type="project" value="RHEA"/>
</dbReference>
<dbReference type="GO" id="GO:0006104">
    <property type="term" value="P:succinyl-CoA metabolic process"/>
    <property type="evidence" value="ECO:0007669"/>
    <property type="project" value="TreeGrafter"/>
</dbReference>
<dbReference type="GO" id="GO:0006099">
    <property type="term" value="P:tricarboxylic acid cycle"/>
    <property type="evidence" value="ECO:0007669"/>
    <property type="project" value="UniProtKB-UniRule"/>
</dbReference>
<dbReference type="FunFam" id="3.30.1490.20:FF:000002">
    <property type="entry name" value="Succinate--CoA ligase [ADP-forming] subunit beta"/>
    <property type="match status" value="1"/>
</dbReference>
<dbReference type="FunFam" id="3.30.470.20:FF:000002">
    <property type="entry name" value="Succinate--CoA ligase [ADP-forming] subunit beta"/>
    <property type="match status" value="1"/>
</dbReference>
<dbReference type="FunFam" id="3.40.50.261:FF:000001">
    <property type="entry name" value="Succinate--CoA ligase [ADP-forming] subunit beta"/>
    <property type="match status" value="1"/>
</dbReference>
<dbReference type="Gene3D" id="3.30.1490.20">
    <property type="entry name" value="ATP-grasp fold, A domain"/>
    <property type="match status" value="1"/>
</dbReference>
<dbReference type="Gene3D" id="3.30.470.20">
    <property type="entry name" value="ATP-grasp fold, B domain"/>
    <property type="match status" value="1"/>
</dbReference>
<dbReference type="Gene3D" id="3.40.50.261">
    <property type="entry name" value="Succinyl-CoA synthetase domains"/>
    <property type="match status" value="1"/>
</dbReference>
<dbReference type="HAMAP" id="MF_00558">
    <property type="entry name" value="Succ_CoA_beta"/>
    <property type="match status" value="1"/>
</dbReference>
<dbReference type="InterPro" id="IPR011761">
    <property type="entry name" value="ATP-grasp"/>
</dbReference>
<dbReference type="InterPro" id="IPR013650">
    <property type="entry name" value="ATP-grasp_succ-CoA_synth-type"/>
</dbReference>
<dbReference type="InterPro" id="IPR013815">
    <property type="entry name" value="ATP_grasp_subdomain_1"/>
</dbReference>
<dbReference type="InterPro" id="IPR017866">
    <property type="entry name" value="Succ-CoA_synthase_bsu_CS"/>
</dbReference>
<dbReference type="InterPro" id="IPR005811">
    <property type="entry name" value="SUCC_ACL_C"/>
</dbReference>
<dbReference type="InterPro" id="IPR005809">
    <property type="entry name" value="Succ_CoA_ligase-like_bsu"/>
</dbReference>
<dbReference type="InterPro" id="IPR016102">
    <property type="entry name" value="Succinyl-CoA_synth-like"/>
</dbReference>
<dbReference type="NCBIfam" id="NF001913">
    <property type="entry name" value="PRK00696.1"/>
    <property type="match status" value="1"/>
</dbReference>
<dbReference type="NCBIfam" id="TIGR01016">
    <property type="entry name" value="sucCoAbeta"/>
    <property type="match status" value="1"/>
</dbReference>
<dbReference type="PANTHER" id="PTHR11815:SF10">
    <property type="entry name" value="SUCCINATE--COA LIGASE [GDP-FORMING] SUBUNIT BETA, MITOCHONDRIAL"/>
    <property type="match status" value="1"/>
</dbReference>
<dbReference type="PANTHER" id="PTHR11815">
    <property type="entry name" value="SUCCINYL-COA SYNTHETASE BETA CHAIN"/>
    <property type="match status" value="1"/>
</dbReference>
<dbReference type="Pfam" id="PF08442">
    <property type="entry name" value="ATP-grasp_2"/>
    <property type="match status" value="1"/>
</dbReference>
<dbReference type="Pfam" id="PF00549">
    <property type="entry name" value="Ligase_CoA"/>
    <property type="match status" value="1"/>
</dbReference>
<dbReference type="PIRSF" id="PIRSF001554">
    <property type="entry name" value="SucCS_beta"/>
    <property type="match status" value="1"/>
</dbReference>
<dbReference type="SUPFAM" id="SSF56059">
    <property type="entry name" value="Glutathione synthetase ATP-binding domain-like"/>
    <property type="match status" value="1"/>
</dbReference>
<dbReference type="SUPFAM" id="SSF52210">
    <property type="entry name" value="Succinyl-CoA synthetase domains"/>
    <property type="match status" value="1"/>
</dbReference>
<dbReference type="PROSITE" id="PS50975">
    <property type="entry name" value="ATP_GRASP"/>
    <property type="match status" value="1"/>
</dbReference>
<dbReference type="PROSITE" id="PS01217">
    <property type="entry name" value="SUCCINYL_COA_LIG_3"/>
    <property type="match status" value="1"/>
</dbReference>
<keyword id="KW-0067">ATP-binding</keyword>
<keyword id="KW-0436">Ligase</keyword>
<keyword id="KW-0460">Magnesium</keyword>
<keyword id="KW-0479">Metal-binding</keyword>
<keyword id="KW-0547">Nucleotide-binding</keyword>
<keyword id="KW-0816">Tricarboxylic acid cycle</keyword>
<proteinExistence type="inferred from homology"/>
<sequence length="388" mass="41406">MNLHEYQAKQLFARYGMPAPTGYACTTPREAEEAASKIGAGPWVVKCQVHAGGRGKAGGVKLVNSKEDIRAFAEQWLGKKLVTYQTDANGQPVHQILVEAATDIDKELYLGAVIDRSSRRVVFMASTEGGVEIEKVAEETPELIHKIALDPLTGPQPYQGRELAFKLGLTGKQVGQFTKIFMGLATLFLERDLAMVEINPLVVTKQGDLICLDGKLGADGNALFRQPELREMRDPSQEDAREAHAAQWELNYVALDGNIGCMVNGAGLAMGTMDIVKLHGGEPANFLDVGGGATKERVTEAFKIILSDDKVKAVFVNIFGGIVRCDLIADGIIGAVEEVGVNVPVVVRLEGNNAELGAKKLADSGLNIIAATSLTDAAQQVVAAVGAK</sequence>
<accession>Q1CFM0</accession>
<accession>C4GWQ7</accession>
<comment type="function">
    <text evidence="1">Succinyl-CoA synthetase functions in the citric acid cycle (TCA), coupling the hydrolysis of succinyl-CoA to the synthesis of either ATP or GTP and thus represents the only step of substrate-level phosphorylation in the TCA. The beta subunit provides nucleotide specificity of the enzyme and binds the substrate succinate, while the binding sites for coenzyme A and phosphate are found in the alpha subunit.</text>
</comment>
<comment type="catalytic activity">
    <reaction evidence="1">
        <text>succinate + ATP + CoA = succinyl-CoA + ADP + phosphate</text>
        <dbReference type="Rhea" id="RHEA:17661"/>
        <dbReference type="ChEBI" id="CHEBI:30031"/>
        <dbReference type="ChEBI" id="CHEBI:30616"/>
        <dbReference type="ChEBI" id="CHEBI:43474"/>
        <dbReference type="ChEBI" id="CHEBI:57287"/>
        <dbReference type="ChEBI" id="CHEBI:57292"/>
        <dbReference type="ChEBI" id="CHEBI:456216"/>
        <dbReference type="EC" id="6.2.1.5"/>
    </reaction>
    <physiologicalReaction direction="right-to-left" evidence="1">
        <dbReference type="Rhea" id="RHEA:17663"/>
    </physiologicalReaction>
</comment>
<comment type="catalytic activity">
    <reaction evidence="1">
        <text>GTP + succinate + CoA = succinyl-CoA + GDP + phosphate</text>
        <dbReference type="Rhea" id="RHEA:22120"/>
        <dbReference type="ChEBI" id="CHEBI:30031"/>
        <dbReference type="ChEBI" id="CHEBI:37565"/>
        <dbReference type="ChEBI" id="CHEBI:43474"/>
        <dbReference type="ChEBI" id="CHEBI:57287"/>
        <dbReference type="ChEBI" id="CHEBI:57292"/>
        <dbReference type="ChEBI" id="CHEBI:58189"/>
    </reaction>
    <physiologicalReaction direction="right-to-left" evidence="1">
        <dbReference type="Rhea" id="RHEA:22122"/>
    </physiologicalReaction>
</comment>
<comment type="cofactor">
    <cofactor evidence="1">
        <name>Mg(2+)</name>
        <dbReference type="ChEBI" id="CHEBI:18420"/>
    </cofactor>
    <text evidence="1">Binds 1 Mg(2+) ion per subunit.</text>
</comment>
<comment type="pathway">
    <text evidence="1">Carbohydrate metabolism; tricarboxylic acid cycle; succinate from succinyl-CoA (ligase route): step 1/1.</text>
</comment>
<comment type="subunit">
    <text evidence="1">Heterotetramer of two alpha and two beta subunits.</text>
</comment>
<comment type="similarity">
    <text evidence="1">Belongs to the succinate/malate CoA ligase beta subunit family.</text>
</comment>
<evidence type="ECO:0000255" key="1">
    <source>
        <dbReference type="HAMAP-Rule" id="MF_00558"/>
    </source>
</evidence>
<protein>
    <recommendedName>
        <fullName evidence="1">Succinate--CoA ligase [ADP-forming] subunit beta</fullName>
        <ecNumber evidence="1">6.2.1.5</ecNumber>
    </recommendedName>
    <alternativeName>
        <fullName evidence="1">Succinyl-CoA synthetase subunit beta</fullName>
        <shortName evidence="1">SCS-beta</shortName>
    </alternativeName>
</protein>
<reference key="1">
    <citation type="journal article" date="2006" name="J. Bacteriol.">
        <title>Complete genome sequence of Yersinia pestis strains Antiqua and Nepal516: evidence of gene reduction in an emerging pathogen.</title>
        <authorList>
            <person name="Chain P.S.G."/>
            <person name="Hu P."/>
            <person name="Malfatti S.A."/>
            <person name="Radnedge L."/>
            <person name="Larimer F."/>
            <person name="Vergez L.M."/>
            <person name="Worsham P."/>
            <person name="Chu M.C."/>
            <person name="Andersen G.L."/>
        </authorList>
    </citation>
    <scope>NUCLEOTIDE SEQUENCE [LARGE SCALE GENOMIC DNA]</scope>
    <source>
        <strain>Nepal516</strain>
    </source>
</reference>
<reference key="2">
    <citation type="submission" date="2009-04" db="EMBL/GenBank/DDBJ databases">
        <title>Yersinia pestis Nepal516A whole genome shotgun sequencing project.</title>
        <authorList>
            <person name="Plunkett G. III"/>
            <person name="Anderson B.D."/>
            <person name="Baumler D.J."/>
            <person name="Burland V."/>
            <person name="Cabot E.L."/>
            <person name="Glasner J.D."/>
            <person name="Mau B."/>
            <person name="Neeno-Eckwall E."/>
            <person name="Perna N.T."/>
            <person name="Munk A.C."/>
            <person name="Tapia R."/>
            <person name="Green L.D."/>
            <person name="Rogers Y.C."/>
            <person name="Detter J.C."/>
            <person name="Bruce D.C."/>
            <person name="Brettin T.S."/>
        </authorList>
    </citation>
    <scope>NUCLEOTIDE SEQUENCE [LARGE SCALE GENOMIC DNA]</scope>
    <source>
        <strain>Nepal516</strain>
    </source>
</reference>
<organism>
    <name type="scientific">Yersinia pestis bv. Antiqua (strain Nepal516)</name>
    <dbReference type="NCBI Taxonomy" id="377628"/>
    <lineage>
        <taxon>Bacteria</taxon>
        <taxon>Pseudomonadati</taxon>
        <taxon>Pseudomonadota</taxon>
        <taxon>Gammaproteobacteria</taxon>
        <taxon>Enterobacterales</taxon>
        <taxon>Yersiniaceae</taxon>
        <taxon>Yersinia</taxon>
    </lineage>
</organism>
<name>SUCC_YERPN</name>
<gene>
    <name evidence="1" type="primary">sucC</name>
    <name type="ordered locus">YPN_2883</name>
    <name type="ORF">YP516_3262</name>
</gene>
<feature type="chain" id="PRO_1000082268" description="Succinate--CoA ligase [ADP-forming] subunit beta">
    <location>
        <begin position="1"/>
        <end position="388"/>
    </location>
</feature>
<feature type="domain" description="ATP-grasp" evidence="1">
    <location>
        <begin position="9"/>
        <end position="244"/>
    </location>
</feature>
<feature type="binding site" evidence="1">
    <location>
        <position position="46"/>
    </location>
    <ligand>
        <name>ATP</name>
        <dbReference type="ChEBI" id="CHEBI:30616"/>
    </ligand>
</feature>
<feature type="binding site" evidence="1">
    <location>
        <begin position="53"/>
        <end position="55"/>
    </location>
    <ligand>
        <name>ATP</name>
        <dbReference type="ChEBI" id="CHEBI:30616"/>
    </ligand>
</feature>
<feature type="binding site" evidence="1">
    <location>
        <position position="99"/>
    </location>
    <ligand>
        <name>ATP</name>
        <dbReference type="ChEBI" id="CHEBI:30616"/>
    </ligand>
</feature>
<feature type="binding site" evidence="1">
    <location>
        <position position="102"/>
    </location>
    <ligand>
        <name>ATP</name>
        <dbReference type="ChEBI" id="CHEBI:30616"/>
    </ligand>
</feature>
<feature type="binding site" evidence="1">
    <location>
        <position position="107"/>
    </location>
    <ligand>
        <name>ATP</name>
        <dbReference type="ChEBI" id="CHEBI:30616"/>
    </ligand>
</feature>
<feature type="binding site" evidence="1">
    <location>
        <position position="199"/>
    </location>
    <ligand>
        <name>Mg(2+)</name>
        <dbReference type="ChEBI" id="CHEBI:18420"/>
    </ligand>
</feature>
<feature type="binding site" evidence="1">
    <location>
        <position position="213"/>
    </location>
    <ligand>
        <name>Mg(2+)</name>
        <dbReference type="ChEBI" id="CHEBI:18420"/>
    </ligand>
</feature>
<feature type="binding site" evidence="1">
    <location>
        <position position="264"/>
    </location>
    <ligand>
        <name>substrate</name>
        <note>ligand shared with subunit alpha</note>
    </ligand>
</feature>
<feature type="binding site" evidence="1">
    <location>
        <begin position="321"/>
        <end position="323"/>
    </location>
    <ligand>
        <name>substrate</name>
        <note>ligand shared with subunit alpha</note>
    </ligand>
</feature>